<protein>
    <recommendedName>
        <fullName evidence="3">Kinetochore protein NUF2 homolog</fullName>
    </recommendedName>
</protein>
<proteinExistence type="evidence at protein level"/>
<dbReference type="EMBL" id="AC018908">
    <property type="protein sequence ID" value="AAG51636.1"/>
    <property type="status" value="ALT_SEQ"/>
    <property type="molecule type" value="Genomic_DNA"/>
</dbReference>
<dbReference type="EMBL" id="CP002684">
    <property type="protein sequence ID" value="AEE33765.1"/>
    <property type="molecule type" value="Genomic_DNA"/>
</dbReference>
<dbReference type="EMBL" id="AY080858">
    <property type="protein sequence ID" value="AAL87331.1"/>
    <property type="molecule type" value="mRNA"/>
</dbReference>
<dbReference type="EMBL" id="AY133856">
    <property type="protein sequence ID" value="AAM91790.1"/>
    <property type="molecule type" value="mRNA"/>
</dbReference>
<dbReference type="PIR" id="F96635">
    <property type="entry name" value="F96635"/>
</dbReference>
<dbReference type="RefSeq" id="NP_176296.2">
    <property type="nucleotide sequence ID" value="NM_104781.3"/>
</dbReference>
<dbReference type="SMR" id="Q8RXJ0"/>
<dbReference type="FunCoup" id="Q8RXJ0">
    <property type="interactions" value="2490"/>
</dbReference>
<dbReference type="STRING" id="3702.Q8RXJ0"/>
<dbReference type="iPTMnet" id="Q8RXJ0"/>
<dbReference type="PaxDb" id="3702-AT1G61000.1"/>
<dbReference type="ProteomicsDB" id="248749"/>
<dbReference type="EnsemblPlants" id="AT1G61000.1">
    <property type="protein sequence ID" value="AT1G61000.1"/>
    <property type="gene ID" value="AT1G61000"/>
</dbReference>
<dbReference type="GeneID" id="842392"/>
<dbReference type="Gramene" id="AT1G61000.1">
    <property type="protein sequence ID" value="AT1G61000.1"/>
    <property type="gene ID" value="AT1G61000"/>
</dbReference>
<dbReference type="KEGG" id="ath:AT1G61000"/>
<dbReference type="Araport" id="AT1G61000"/>
<dbReference type="TAIR" id="AT1G61000">
    <property type="gene designation" value="NUF2"/>
</dbReference>
<dbReference type="eggNOG" id="KOG4438">
    <property type="taxonomic scope" value="Eukaryota"/>
</dbReference>
<dbReference type="HOGENOM" id="CLU_025461_0_0_1"/>
<dbReference type="InParanoid" id="Q8RXJ0"/>
<dbReference type="OMA" id="YLKMEAH"/>
<dbReference type="OrthoDB" id="8194677at2759"/>
<dbReference type="PhylomeDB" id="Q8RXJ0"/>
<dbReference type="PRO" id="PR:Q8RXJ0"/>
<dbReference type="Proteomes" id="UP000006548">
    <property type="component" value="Chromosome 1"/>
</dbReference>
<dbReference type="ExpressionAtlas" id="Q8RXJ0">
    <property type="expression patterns" value="baseline and differential"/>
</dbReference>
<dbReference type="GO" id="GO:0005828">
    <property type="term" value="C:kinetochore microtubule"/>
    <property type="evidence" value="ECO:0000314"/>
    <property type="project" value="TAIR"/>
</dbReference>
<dbReference type="GO" id="GO:0031262">
    <property type="term" value="C:Ndc80 complex"/>
    <property type="evidence" value="ECO:0000250"/>
    <property type="project" value="UniProtKB"/>
</dbReference>
<dbReference type="GO" id="GO:0000325">
    <property type="term" value="C:plant-type vacuole"/>
    <property type="evidence" value="ECO:0007005"/>
    <property type="project" value="TAIR"/>
</dbReference>
<dbReference type="GO" id="GO:0005886">
    <property type="term" value="C:plasma membrane"/>
    <property type="evidence" value="ECO:0007005"/>
    <property type="project" value="TAIR"/>
</dbReference>
<dbReference type="GO" id="GO:0008017">
    <property type="term" value="F:microtubule binding"/>
    <property type="evidence" value="ECO:0000250"/>
    <property type="project" value="UniProtKB"/>
</dbReference>
<dbReference type="GO" id="GO:0051301">
    <property type="term" value="P:cell division"/>
    <property type="evidence" value="ECO:0007669"/>
    <property type="project" value="UniProtKB-KW"/>
</dbReference>
<dbReference type="GO" id="GO:0010342">
    <property type="term" value="P:endosperm cellularization"/>
    <property type="evidence" value="ECO:0000315"/>
    <property type="project" value="TAIR"/>
</dbReference>
<dbReference type="GO" id="GO:0000070">
    <property type="term" value="P:mitotic sister chromatid segregation"/>
    <property type="evidence" value="ECO:0000315"/>
    <property type="project" value="TAIR"/>
</dbReference>
<dbReference type="GO" id="GO:0007052">
    <property type="term" value="P:mitotic spindle organization"/>
    <property type="evidence" value="ECO:0000315"/>
    <property type="project" value="TAIR"/>
</dbReference>
<dbReference type="Gene3D" id="1.10.418.60">
    <property type="entry name" value="Ncd80 complex, Nuf2 subunit"/>
    <property type="match status" value="1"/>
</dbReference>
<dbReference type="InterPro" id="IPR005549">
    <property type="entry name" value="Kinetochore_Nuf2_N"/>
</dbReference>
<dbReference type="InterPro" id="IPR038275">
    <property type="entry name" value="Nuf2_N_sf"/>
</dbReference>
<dbReference type="PANTHER" id="PTHR48441">
    <property type="match status" value="1"/>
</dbReference>
<dbReference type="PANTHER" id="PTHR48441:SF1">
    <property type="entry name" value="NT-3"/>
    <property type="match status" value="1"/>
</dbReference>
<dbReference type="Pfam" id="PF03800">
    <property type="entry name" value="Nuf2"/>
    <property type="match status" value="1"/>
</dbReference>
<keyword id="KW-0131">Cell cycle</keyword>
<keyword id="KW-0132">Cell division</keyword>
<keyword id="KW-0137">Centromere</keyword>
<keyword id="KW-0158">Chromosome</keyword>
<keyword id="KW-0175">Coiled coil</keyword>
<keyword id="KW-0498">Mitosis</keyword>
<keyword id="KW-1185">Reference proteome</keyword>
<organism>
    <name type="scientific">Arabidopsis thaliana</name>
    <name type="common">Mouse-ear cress</name>
    <dbReference type="NCBI Taxonomy" id="3702"/>
    <lineage>
        <taxon>Eukaryota</taxon>
        <taxon>Viridiplantae</taxon>
        <taxon>Streptophyta</taxon>
        <taxon>Embryophyta</taxon>
        <taxon>Tracheophyta</taxon>
        <taxon>Spermatophyta</taxon>
        <taxon>Magnoliopsida</taxon>
        <taxon>eudicotyledons</taxon>
        <taxon>Gunneridae</taxon>
        <taxon>Pentapetalae</taxon>
        <taxon>rosids</taxon>
        <taxon>malvids</taxon>
        <taxon>Brassicales</taxon>
        <taxon>Brassicaceae</taxon>
        <taxon>Camelineae</taxon>
        <taxon>Arabidopsis</taxon>
    </lineage>
</organism>
<evidence type="ECO:0000255" key="1"/>
<evidence type="ECO:0000269" key="2">
    <source>
    </source>
</evidence>
<evidence type="ECO:0000303" key="3">
    <source>
    </source>
</evidence>
<evidence type="ECO:0000305" key="4"/>
<evidence type="ECO:0000305" key="5">
    <source>
    </source>
</evidence>
<evidence type="ECO:0000312" key="6">
    <source>
        <dbReference type="Araport" id="AT1G61000"/>
    </source>
</evidence>
<evidence type="ECO:0000312" key="7">
    <source>
        <dbReference type="EMBL" id="AAG51636.1"/>
    </source>
</evidence>
<feature type="chain" id="PRO_0000444103" description="Kinetochore protein NUF2 homolog">
    <location>
        <begin position="1"/>
        <end position="440"/>
    </location>
</feature>
<feature type="coiled-coil region" evidence="1">
    <location>
        <begin position="142"/>
        <end position="239"/>
    </location>
</feature>
<feature type="coiled-coil region" evidence="1">
    <location>
        <begin position="299"/>
        <end position="386"/>
    </location>
</feature>
<comment type="function">
    <text evidence="5">Acts as a component of the essential kinetochore-associated NDC80 complex, which is required for chromosome segregation and spindle checkpoint activity to ensure proper cell division.</text>
</comment>
<comment type="subunit">
    <text evidence="2">Component of the NDC80 complex, which consists of NDC80, NUF2, SPC24 and SPC25.</text>
</comment>
<comment type="subcellular location">
    <subcellularLocation>
        <location evidence="2">Chromosome</location>
        <location evidence="2">Centromere</location>
    </subcellularLocation>
</comment>
<comment type="disruption phenotype">
    <text evidence="2">Embryonic lethality due to division arrest before the globular stage.</text>
</comment>
<comment type="similarity">
    <text evidence="4">Belongs to the NUF2 family.</text>
</comment>
<comment type="sequence caution" evidence="4">
    <conflict type="erroneous gene model prediction">
        <sequence resource="EMBL-CDS" id="AAG51636"/>
    </conflict>
    <text>The predicted gene has been split into 2 genes: At1g60995 and At1g61000.</text>
</comment>
<name>NUF2_ARATH</name>
<sequence>MSAYEYPRLSRSDIITALKDAQIASVTETDLKTPTSDFVSELYTRILIYLDALDEEEKGQVDFEALEQLENPDHHATSMQAMKLYCKVKDMLEMLDCPLPISFKDLLRPESSRTEFFISALLNYGLYKDSKMDLIRPKAEELGLLDEQRKQCEAKVAQLNAEIGEFDEAVERDLPFVQELEANIEQLNKKILELNNQQMSLRATFQKMREKSTQMDNEISKAEFDLVETVQENANLRSQIVQSPDKLQGALEEKKLVLGETKKAEQSAMVTFQEKAAILEVFEKALKKILKSSSQLQLINEQVTNAKTVEKEFKALKDKLSEDGVAYKSLEAKVVERERIVEQLNESLKQLEKEKAVMFDDWTKQLNELKVEVESRRRELETRQTNVESVVAMVDDNTAKTNQVRQSGEAKVKKLAAKYEEIVKQFHEYTVSFDAFLPSL</sequence>
<gene>
    <name evidence="3" type="primary">NUF2</name>
    <name evidence="6" type="ordered locus">At1g61000</name>
    <name evidence="7" type="ORF">T7P1.14</name>
</gene>
<accession>Q8RXJ0</accession>
<accession>Q9C953</accession>
<reference key="1">
    <citation type="journal article" date="2000" name="Nature">
        <title>Sequence and analysis of chromosome 1 of the plant Arabidopsis thaliana.</title>
        <authorList>
            <person name="Theologis A."/>
            <person name="Ecker J.R."/>
            <person name="Palm C.J."/>
            <person name="Federspiel N.A."/>
            <person name="Kaul S."/>
            <person name="White O."/>
            <person name="Alonso J."/>
            <person name="Altafi H."/>
            <person name="Araujo R."/>
            <person name="Bowman C.L."/>
            <person name="Brooks S.Y."/>
            <person name="Buehler E."/>
            <person name="Chan A."/>
            <person name="Chao Q."/>
            <person name="Chen H."/>
            <person name="Cheuk R.F."/>
            <person name="Chin C.W."/>
            <person name="Chung M.K."/>
            <person name="Conn L."/>
            <person name="Conway A.B."/>
            <person name="Conway A.R."/>
            <person name="Creasy T.H."/>
            <person name="Dewar K."/>
            <person name="Dunn P."/>
            <person name="Etgu P."/>
            <person name="Feldblyum T.V."/>
            <person name="Feng J.-D."/>
            <person name="Fong B."/>
            <person name="Fujii C.Y."/>
            <person name="Gill J.E."/>
            <person name="Goldsmith A.D."/>
            <person name="Haas B."/>
            <person name="Hansen N.F."/>
            <person name="Hughes B."/>
            <person name="Huizar L."/>
            <person name="Hunter J.L."/>
            <person name="Jenkins J."/>
            <person name="Johnson-Hopson C."/>
            <person name="Khan S."/>
            <person name="Khaykin E."/>
            <person name="Kim C.J."/>
            <person name="Koo H.L."/>
            <person name="Kremenetskaia I."/>
            <person name="Kurtz D.B."/>
            <person name="Kwan A."/>
            <person name="Lam B."/>
            <person name="Langin-Hooper S."/>
            <person name="Lee A."/>
            <person name="Lee J.M."/>
            <person name="Lenz C.A."/>
            <person name="Li J.H."/>
            <person name="Li Y.-P."/>
            <person name="Lin X."/>
            <person name="Liu S.X."/>
            <person name="Liu Z.A."/>
            <person name="Luros J.S."/>
            <person name="Maiti R."/>
            <person name="Marziali A."/>
            <person name="Militscher J."/>
            <person name="Miranda M."/>
            <person name="Nguyen M."/>
            <person name="Nierman W.C."/>
            <person name="Osborne B.I."/>
            <person name="Pai G."/>
            <person name="Peterson J."/>
            <person name="Pham P.K."/>
            <person name="Rizzo M."/>
            <person name="Rooney T."/>
            <person name="Rowley D."/>
            <person name="Sakano H."/>
            <person name="Salzberg S.L."/>
            <person name="Schwartz J.R."/>
            <person name="Shinn P."/>
            <person name="Southwick A.M."/>
            <person name="Sun H."/>
            <person name="Tallon L.J."/>
            <person name="Tambunga G."/>
            <person name="Toriumi M.J."/>
            <person name="Town C.D."/>
            <person name="Utterback T."/>
            <person name="Van Aken S."/>
            <person name="Vaysberg M."/>
            <person name="Vysotskaia V.S."/>
            <person name="Walker M."/>
            <person name="Wu D."/>
            <person name="Yu G."/>
            <person name="Fraser C.M."/>
            <person name="Venter J.C."/>
            <person name="Davis R.W."/>
        </authorList>
    </citation>
    <scope>NUCLEOTIDE SEQUENCE [LARGE SCALE GENOMIC DNA]</scope>
    <source>
        <strain>cv. Columbia</strain>
    </source>
</reference>
<reference key="2">
    <citation type="journal article" date="2017" name="Plant J.">
        <title>Araport11: a complete reannotation of the Arabidopsis thaliana reference genome.</title>
        <authorList>
            <person name="Cheng C.Y."/>
            <person name="Krishnakumar V."/>
            <person name="Chan A.P."/>
            <person name="Thibaud-Nissen F."/>
            <person name="Schobel S."/>
            <person name="Town C.D."/>
        </authorList>
    </citation>
    <scope>GENOME REANNOTATION</scope>
    <source>
        <strain>cv. Columbia</strain>
    </source>
</reference>
<reference key="3">
    <citation type="journal article" date="2003" name="Science">
        <title>Empirical analysis of transcriptional activity in the Arabidopsis genome.</title>
        <authorList>
            <person name="Yamada K."/>
            <person name="Lim J."/>
            <person name="Dale J.M."/>
            <person name="Chen H."/>
            <person name="Shinn P."/>
            <person name="Palm C.J."/>
            <person name="Southwick A.M."/>
            <person name="Wu H.C."/>
            <person name="Kim C.J."/>
            <person name="Nguyen M."/>
            <person name="Pham P.K."/>
            <person name="Cheuk R.F."/>
            <person name="Karlin-Newmann G."/>
            <person name="Liu S.X."/>
            <person name="Lam B."/>
            <person name="Sakano H."/>
            <person name="Wu T."/>
            <person name="Yu G."/>
            <person name="Miranda M."/>
            <person name="Quach H.L."/>
            <person name="Tripp M."/>
            <person name="Chang C.H."/>
            <person name="Lee J.M."/>
            <person name="Toriumi M.J."/>
            <person name="Chan M.M."/>
            <person name="Tang C.C."/>
            <person name="Onodera C.S."/>
            <person name="Deng J.M."/>
            <person name="Akiyama K."/>
            <person name="Ansari Y."/>
            <person name="Arakawa T."/>
            <person name="Banh J."/>
            <person name="Banno F."/>
            <person name="Bowser L."/>
            <person name="Brooks S.Y."/>
            <person name="Carninci P."/>
            <person name="Chao Q."/>
            <person name="Choy N."/>
            <person name="Enju A."/>
            <person name="Goldsmith A.D."/>
            <person name="Gurjal M."/>
            <person name="Hansen N.F."/>
            <person name="Hayashizaki Y."/>
            <person name="Johnson-Hopson C."/>
            <person name="Hsuan V.W."/>
            <person name="Iida K."/>
            <person name="Karnes M."/>
            <person name="Khan S."/>
            <person name="Koesema E."/>
            <person name="Ishida J."/>
            <person name="Jiang P.X."/>
            <person name="Jones T."/>
            <person name="Kawai J."/>
            <person name="Kamiya A."/>
            <person name="Meyers C."/>
            <person name="Nakajima M."/>
            <person name="Narusaka M."/>
            <person name="Seki M."/>
            <person name="Sakurai T."/>
            <person name="Satou M."/>
            <person name="Tamse R."/>
            <person name="Vaysberg M."/>
            <person name="Wallender E.K."/>
            <person name="Wong C."/>
            <person name="Yamamura Y."/>
            <person name="Yuan S."/>
            <person name="Shinozaki K."/>
            <person name="Davis R.W."/>
            <person name="Theologis A."/>
            <person name="Ecker J.R."/>
        </authorList>
    </citation>
    <scope>NUCLEOTIDE SEQUENCE [LARGE SCALE MRNA]</scope>
    <source>
        <strain>cv. Columbia</strain>
    </source>
</reference>
<reference key="4">
    <citation type="journal article" date="2018" name="Plant J.">
        <title>MUN (MERISTEM UNSTRUCTURED), encoding a SPC24 homolog of NDC80 kinetochore complex, affects development through cell division in Arabidopsis thaliana.</title>
        <authorList>
            <person name="Shin J."/>
            <person name="Jeong G."/>
            <person name="Park J.Y."/>
            <person name="Kim H."/>
            <person name="Lee I."/>
        </authorList>
    </citation>
    <scope>FUNCTION</scope>
    <scope>SUBUNIT</scope>
    <scope>SUBCELLULAR LOCATION</scope>
    <scope>DISRUPTION PHENOTYPE</scope>
</reference>